<evidence type="ECO:0000255" key="1">
    <source>
        <dbReference type="PROSITE-ProRule" id="PRU10095"/>
    </source>
</evidence>
<evidence type="ECO:0000305" key="2"/>
<comment type="cofactor">
    <cofactor evidence="2">
        <name>Zn(2+)</name>
        <dbReference type="ChEBI" id="CHEBI:29105"/>
    </cofactor>
    <text evidence="2">Binds 1 zinc ion per subunit.</text>
</comment>
<comment type="similarity">
    <text evidence="2">Belongs to the peptidase M48B family.</text>
</comment>
<feature type="chain" id="PRO_0000138936" description="Uncharacterized metalloprotease YhfN">
    <location>
        <begin position="1"/>
        <end position="426"/>
    </location>
</feature>
<feature type="active site" evidence="1">
    <location>
        <position position="278"/>
    </location>
</feature>
<feature type="binding site" evidence="1">
    <location>
        <position position="277"/>
    </location>
    <ligand>
        <name>Zn(2+)</name>
        <dbReference type="ChEBI" id="CHEBI:29105"/>
        <note>catalytic</note>
    </ligand>
</feature>
<feature type="binding site" evidence="1">
    <location>
        <position position="281"/>
    </location>
    <ligand>
        <name>Zn(2+)</name>
        <dbReference type="ChEBI" id="CHEBI:29105"/>
        <note>catalytic</note>
    </ligand>
</feature>
<feature type="binding site" evidence="1">
    <location>
        <position position="357"/>
    </location>
    <ligand>
        <name>Zn(2+)</name>
        <dbReference type="ChEBI" id="CHEBI:29105"/>
        <note>catalytic</note>
    </ligand>
</feature>
<feature type="sequence conflict" description="In Ref. 3; AAA22830." evidence="2" ref="3">
    <original>ASFMKPS</original>
    <variation>LESTAQA</variation>
    <location>
        <begin position="43"/>
        <end position="49"/>
    </location>
</feature>
<keyword id="KW-0378">Hydrolase</keyword>
<keyword id="KW-0479">Metal-binding</keyword>
<keyword id="KW-0482">Metalloprotease</keyword>
<keyword id="KW-0645">Protease</keyword>
<keyword id="KW-1185">Reference proteome</keyword>
<keyword id="KW-0862">Zinc</keyword>
<organism>
    <name type="scientific">Bacillus subtilis (strain 168)</name>
    <dbReference type="NCBI Taxonomy" id="224308"/>
    <lineage>
        <taxon>Bacteria</taxon>
        <taxon>Bacillati</taxon>
        <taxon>Bacillota</taxon>
        <taxon>Bacilli</taxon>
        <taxon>Bacillales</taxon>
        <taxon>Bacillaceae</taxon>
        <taxon>Bacillus</taxon>
    </lineage>
</organism>
<name>YHFN_BACSU</name>
<proteinExistence type="inferred from homology"/>
<reference key="1">
    <citation type="journal article" date="1998" name="Microbiology">
        <title>The 172 kb prkA-addAB region from 83 degrees to 97 degrees of the Bacillus subtilis chromosome contains several dysfunctional genes, the glyB marker, many genes encoding transporter proteins, and the ubiquitous hit gene.</title>
        <authorList>
            <person name="Noback M.A."/>
            <person name="Holsappel S."/>
            <person name="Kiewiet R."/>
            <person name="Terpstra P."/>
            <person name="Wambutt R."/>
            <person name="Wedler H."/>
            <person name="Venema G."/>
            <person name="Bron S."/>
        </authorList>
    </citation>
    <scope>NUCLEOTIDE SEQUENCE [GENOMIC DNA]</scope>
    <source>
        <strain>168</strain>
    </source>
</reference>
<reference key="2">
    <citation type="journal article" date="1997" name="Nature">
        <title>The complete genome sequence of the Gram-positive bacterium Bacillus subtilis.</title>
        <authorList>
            <person name="Kunst F."/>
            <person name="Ogasawara N."/>
            <person name="Moszer I."/>
            <person name="Albertini A.M."/>
            <person name="Alloni G."/>
            <person name="Azevedo V."/>
            <person name="Bertero M.G."/>
            <person name="Bessieres P."/>
            <person name="Bolotin A."/>
            <person name="Borchert S."/>
            <person name="Borriss R."/>
            <person name="Boursier L."/>
            <person name="Brans A."/>
            <person name="Braun M."/>
            <person name="Brignell S.C."/>
            <person name="Bron S."/>
            <person name="Brouillet S."/>
            <person name="Bruschi C.V."/>
            <person name="Caldwell B."/>
            <person name="Capuano V."/>
            <person name="Carter N.M."/>
            <person name="Choi S.-K."/>
            <person name="Codani J.-J."/>
            <person name="Connerton I.F."/>
            <person name="Cummings N.J."/>
            <person name="Daniel R.A."/>
            <person name="Denizot F."/>
            <person name="Devine K.M."/>
            <person name="Duesterhoeft A."/>
            <person name="Ehrlich S.D."/>
            <person name="Emmerson P.T."/>
            <person name="Entian K.-D."/>
            <person name="Errington J."/>
            <person name="Fabret C."/>
            <person name="Ferrari E."/>
            <person name="Foulger D."/>
            <person name="Fritz C."/>
            <person name="Fujita M."/>
            <person name="Fujita Y."/>
            <person name="Fuma S."/>
            <person name="Galizzi A."/>
            <person name="Galleron N."/>
            <person name="Ghim S.-Y."/>
            <person name="Glaser P."/>
            <person name="Goffeau A."/>
            <person name="Golightly E.J."/>
            <person name="Grandi G."/>
            <person name="Guiseppi G."/>
            <person name="Guy B.J."/>
            <person name="Haga K."/>
            <person name="Haiech J."/>
            <person name="Harwood C.R."/>
            <person name="Henaut A."/>
            <person name="Hilbert H."/>
            <person name="Holsappel S."/>
            <person name="Hosono S."/>
            <person name="Hullo M.-F."/>
            <person name="Itaya M."/>
            <person name="Jones L.-M."/>
            <person name="Joris B."/>
            <person name="Karamata D."/>
            <person name="Kasahara Y."/>
            <person name="Klaerr-Blanchard M."/>
            <person name="Klein C."/>
            <person name="Kobayashi Y."/>
            <person name="Koetter P."/>
            <person name="Koningstein G."/>
            <person name="Krogh S."/>
            <person name="Kumano M."/>
            <person name="Kurita K."/>
            <person name="Lapidus A."/>
            <person name="Lardinois S."/>
            <person name="Lauber J."/>
            <person name="Lazarevic V."/>
            <person name="Lee S.-M."/>
            <person name="Levine A."/>
            <person name="Liu H."/>
            <person name="Masuda S."/>
            <person name="Mauel C."/>
            <person name="Medigue C."/>
            <person name="Medina N."/>
            <person name="Mellado R.P."/>
            <person name="Mizuno M."/>
            <person name="Moestl D."/>
            <person name="Nakai S."/>
            <person name="Noback M."/>
            <person name="Noone D."/>
            <person name="O'Reilly M."/>
            <person name="Ogawa K."/>
            <person name="Ogiwara A."/>
            <person name="Oudega B."/>
            <person name="Park S.-H."/>
            <person name="Parro V."/>
            <person name="Pohl T.M."/>
            <person name="Portetelle D."/>
            <person name="Porwollik S."/>
            <person name="Prescott A.M."/>
            <person name="Presecan E."/>
            <person name="Pujic P."/>
            <person name="Purnelle B."/>
            <person name="Rapoport G."/>
            <person name="Rey M."/>
            <person name="Reynolds S."/>
            <person name="Rieger M."/>
            <person name="Rivolta C."/>
            <person name="Rocha E."/>
            <person name="Roche B."/>
            <person name="Rose M."/>
            <person name="Sadaie Y."/>
            <person name="Sato T."/>
            <person name="Scanlan E."/>
            <person name="Schleich S."/>
            <person name="Schroeter R."/>
            <person name="Scoffone F."/>
            <person name="Sekiguchi J."/>
            <person name="Sekowska A."/>
            <person name="Seror S.J."/>
            <person name="Serror P."/>
            <person name="Shin B.-S."/>
            <person name="Soldo B."/>
            <person name="Sorokin A."/>
            <person name="Tacconi E."/>
            <person name="Takagi T."/>
            <person name="Takahashi H."/>
            <person name="Takemaru K."/>
            <person name="Takeuchi M."/>
            <person name="Tamakoshi A."/>
            <person name="Tanaka T."/>
            <person name="Terpstra P."/>
            <person name="Tognoni A."/>
            <person name="Tosato V."/>
            <person name="Uchiyama S."/>
            <person name="Vandenbol M."/>
            <person name="Vannier F."/>
            <person name="Vassarotti A."/>
            <person name="Viari A."/>
            <person name="Wambutt R."/>
            <person name="Wedler E."/>
            <person name="Wedler H."/>
            <person name="Weitzenegger T."/>
            <person name="Winters P."/>
            <person name="Wipat A."/>
            <person name="Yamamoto H."/>
            <person name="Yamane K."/>
            <person name="Yasumoto K."/>
            <person name="Yata K."/>
            <person name="Yoshida K."/>
            <person name="Yoshikawa H.-F."/>
            <person name="Zumstein E."/>
            <person name="Yoshikawa H."/>
            <person name="Danchin A."/>
        </authorList>
    </citation>
    <scope>NUCLEOTIDE SEQUENCE [LARGE SCALE GENOMIC DNA]</scope>
    <source>
        <strain>168</strain>
    </source>
</reference>
<reference key="3">
    <citation type="journal article" date="1988" name="Gene">
        <title>Characterization of signal-sequence-coding regions selected from the Bacillus subtilis chromosome.</title>
        <authorList>
            <person name="Smith H."/>
            <person name="de Jong A."/>
            <person name="Bron S."/>
            <person name="Venema G."/>
        </authorList>
    </citation>
    <scope>NUCLEOTIDE SEQUENCE [GENOMIC DNA] OF 1-49</scope>
</reference>
<gene>
    <name type="primary">yhfN</name>
    <name type="synonym">yzoA</name>
    <name type="ordered locus">BSU10290</name>
</gene>
<accession>P40769</accession>
<accession>O07612</accession>
<sequence>MRKWIAAAGLAYVLYGLFFYWYFFLSGDSAIPEAVKGTQADPASFMKPSELAVAEQYSNVKNFLFFIGVPLDWFLFFVLLVSGVSKKIKKWIEAAVPFRFLQTVGFVFVLSLITTLVTLPLDWIGYQVSLDYNISTQTTASWAKDQVISFWISFPIFTLCVLVFYWLIKRHEKKWWLYAWLLTVPFSLFLFFIQPVIIDPLYNDFYPLKNKELESKILELADEANIPADHVYEVNMSEKTNALNAYVTGIGANKRIVLWDTTLNKLDDSEILFIMGHEMGHYVMKHVYIGLAGYLLVSLAGFYVIDKLYKRTVRLTRSMFHLEGRHDLAALPLLLLLFSVLSFAVTPFSNAVSRYQENKADQYGIELTENREAAVKTFQDLAVTGLSQVDPPVLVKIFRGSHPSIMERIQHAEKEENAPEHQDADK</sequence>
<protein>
    <recommendedName>
        <fullName>Uncharacterized metalloprotease YhfN</fullName>
        <ecNumber>3.4.24.-</ecNumber>
    </recommendedName>
    <alternativeName>
        <fullName>PSP23</fullName>
    </alternativeName>
</protein>
<dbReference type="EC" id="3.4.24.-"/>
<dbReference type="EMBL" id="Y14083">
    <property type="protein sequence ID" value="CAA74535.1"/>
    <property type="molecule type" value="Genomic_DNA"/>
</dbReference>
<dbReference type="EMBL" id="AL009126">
    <property type="protein sequence ID" value="CAB12869.1"/>
    <property type="molecule type" value="Genomic_DNA"/>
</dbReference>
<dbReference type="EMBL" id="M22914">
    <property type="protein sequence ID" value="AAA22830.1"/>
    <property type="molecule type" value="Genomic_DNA"/>
</dbReference>
<dbReference type="PIR" id="C69831">
    <property type="entry name" value="C69831"/>
</dbReference>
<dbReference type="RefSeq" id="NP_388910.1">
    <property type="nucleotide sequence ID" value="NC_000964.3"/>
</dbReference>
<dbReference type="RefSeq" id="WP_003233175.1">
    <property type="nucleotide sequence ID" value="NZ_OZ025638.1"/>
</dbReference>
<dbReference type="SMR" id="P40769"/>
<dbReference type="FunCoup" id="P40769">
    <property type="interactions" value="510"/>
</dbReference>
<dbReference type="STRING" id="224308.BSU10290"/>
<dbReference type="MEROPS" id="M48.009"/>
<dbReference type="PaxDb" id="224308-BSU10290"/>
<dbReference type="EnsemblBacteria" id="CAB12869">
    <property type="protein sequence ID" value="CAB12869"/>
    <property type="gene ID" value="BSU_10290"/>
</dbReference>
<dbReference type="GeneID" id="936314"/>
<dbReference type="KEGG" id="bsu:BSU10290"/>
<dbReference type="PATRIC" id="fig|224308.179.peg.1105"/>
<dbReference type="eggNOG" id="COG0501">
    <property type="taxonomic scope" value="Bacteria"/>
</dbReference>
<dbReference type="InParanoid" id="P40769"/>
<dbReference type="OrthoDB" id="9781930at2"/>
<dbReference type="BioCyc" id="BSUB:BSU10290-MONOMER"/>
<dbReference type="Proteomes" id="UP000001570">
    <property type="component" value="Chromosome"/>
</dbReference>
<dbReference type="GO" id="GO:0046872">
    <property type="term" value="F:metal ion binding"/>
    <property type="evidence" value="ECO:0007669"/>
    <property type="project" value="UniProtKB-KW"/>
</dbReference>
<dbReference type="GO" id="GO:0004222">
    <property type="term" value="F:metalloendopeptidase activity"/>
    <property type="evidence" value="ECO:0000318"/>
    <property type="project" value="GO_Central"/>
</dbReference>
<dbReference type="GO" id="GO:0071586">
    <property type="term" value="P:CAAX-box protein processing"/>
    <property type="evidence" value="ECO:0000318"/>
    <property type="project" value="GO_Central"/>
</dbReference>
<dbReference type="CDD" id="cd07343">
    <property type="entry name" value="M48A_Zmpste24p_like"/>
    <property type="match status" value="1"/>
</dbReference>
<dbReference type="FunFam" id="3.30.2010.10:FF:000010">
    <property type="entry name" value="M48 family peptidase"/>
    <property type="match status" value="1"/>
</dbReference>
<dbReference type="Gene3D" id="3.30.2010.10">
    <property type="entry name" value="Metalloproteases ('zincins'), catalytic domain"/>
    <property type="match status" value="1"/>
</dbReference>
<dbReference type="InterPro" id="IPR027057">
    <property type="entry name" value="CAXX_Prtase_1"/>
</dbReference>
<dbReference type="InterPro" id="IPR001915">
    <property type="entry name" value="Peptidase_M48"/>
</dbReference>
<dbReference type="InterPro" id="IPR032456">
    <property type="entry name" value="Peptidase_M48_N"/>
</dbReference>
<dbReference type="PANTHER" id="PTHR10120">
    <property type="entry name" value="CAAX PRENYL PROTEASE 1"/>
    <property type="match status" value="1"/>
</dbReference>
<dbReference type="Pfam" id="PF01435">
    <property type="entry name" value="Peptidase_M48"/>
    <property type="match status" value="1"/>
</dbReference>
<dbReference type="Pfam" id="PF16491">
    <property type="entry name" value="Peptidase_M48_N"/>
    <property type="match status" value="1"/>
</dbReference>
<dbReference type="PROSITE" id="PS00142">
    <property type="entry name" value="ZINC_PROTEASE"/>
    <property type="match status" value="1"/>
</dbReference>